<accession>P05028</accession>
<evidence type="ECO:0000250" key="1"/>
<evidence type="ECO:0000250" key="2">
    <source>
        <dbReference type="UniProtKB" id="P05026"/>
    </source>
</evidence>
<evidence type="ECO:0000250" key="3">
    <source>
        <dbReference type="UniProtKB" id="P07340"/>
    </source>
</evidence>
<evidence type="ECO:0000250" key="4">
    <source>
        <dbReference type="UniProtKB" id="P14094"/>
    </source>
</evidence>
<evidence type="ECO:0000255" key="5"/>
<evidence type="ECO:0000305" key="6"/>
<sequence>MARGKAKEEGSWKKFIWNSEKKEFLGRTGGSWFKILLFYVIFYGCLAGIFIGTIQVMLLTISEFKPTYQDRVAPPGLTQIPQIQKTEIAFRPNDPKSYMTYVDNIDNFLKKYRDSAQKDDMIFEDCGNVPSELKDRGEFNNEQGERKVCRFKLEWLGNCSGINDETYGYKEGKPCVIIKLNRVLGFKPKPPKNESLETYPVMKYNPYVLPVQCTGKRDEDKEKVGSIEYFGLGGYPGFPLQYYPYYGKLLQPKYLQPLLAVQFTNLTMDTEIRIECKAYGENIGYSEKDRFQGRFDVKIEVKS</sequence>
<dbReference type="EMBL" id="X03883">
    <property type="protein sequence ID" value="CAA27515.1"/>
    <property type="molecule type" value="mRNA"/>
</dbReference>
<dbReference type="PIR" id="A25768">
    <property type="entry name" value="A25768"/>
</dbReference>
<dbReference type="RefSeq" id="NP_001009796.1">
    <property type="nucleotide sequence ID" value="NM_001009796.1"/>
</dbReference>
<dbReference type="SMR" id="P05028"/>
<dbReference type="STRING" id="9940.ENSOARP00000010054"/>
<dbReference type="GlyCosmos" id="P05028">
    <property type="glycosylation" value="3 sites, No reported glycans"/>
</dbReference>
<dbReference type="PaxDb" id="9940-ENSOARP00000010054"/>
<dbReference type="Ensembl" id="ENSOART00040032106">
    <property type="protein sequence ID" value="ENSOARP00040016441"/>
    <property type="gene ID" value="ENSOARG00040019331"/>
</dbReference>
<dbReference type="Ensembl" id="ENSOART00180029432">
    <property type="protein sequence ID" value="ENSOARP00180015124"/>
    <property type="gene ID" value="ENSOARG00180017925"/>
</dbReference>
<dbReference type="Ensembl" id="ENSOART00185060139">
    <property type="protein sequence ID" value="ENSOARP00185030501"/>
    <property type="gene ID" value="ENSOARG00185036054"/>
</dbReference>
<dbReference type="Ensembl" id="ENSOART00215027256">
    <property type="protein sequence ID" value="ENSOARP00215014386"/>
    <property type="gene ID" value="ENSOARG00215016228"/>
</dbReference>
<dbReference type="Ensembl" id="ENSOART00220030957">
    <property type="protein sequence ID" value="ENSOARP00220017073"/>
    <property type="gene ID" value="ENSOARG00220018550"/>
</dbReference>
<dbReference type="Ensembl" id="ENSOART00225071854">
    <property type="protein sequence ID" value="ENSOARP00225036486"/>
    <property type="gene ID" value="ENSOARG00225043428"/>
</dbReference>
<dbReference type="GeneID" id="443384"/>
<dbReference type="KEGG" id="oas:443384"/>
<dbReference type="CTD" id="481"/>
<dbReference type="eggNOG" id="KOG3927">
    <property type="taxonomic scope" value="Eukaryota"/>
</dbReference>
<dbReference type="HOGENOM" id="CLU_057702_2_0_1"/>
<dbReference type="OMA" id="WEGFRVF"/>
<dbReference type="OrthoDB" id="5912413at2759"/>
<dbReference type="Proteomes" id="UP000002356">
    <property type="component" value="Chromosome 12"/>
</dbReference>
<dbReference type="Bgee" id="ENSOARG00000009371">
    <property type="expression patterns" value="Expressed in adult mammalian kidney and 54 other cell types or tissues"/>
</dbReference>
<dbReference type="GO" id="GO:0016324">
    <property type="term" value="C:apical plasma membrane"/>
    <property type="evidence" value="ECO:0000250"/>
    <property type="project" value="UniProtKB"/>
</dbReference>
<dbReference type="GO" id="GO:0016323">
    <property type="term" value="C:basolateral plasma membrane"/>
    <property type="evidence" value="ECO:0007669"/>
    <property type="project" value="Ensembl"/>
</dbReference>
<dbReference type="GO" id="GO:0014704">
    <property type="term" value="C:intercalated disc"/>
    <property type="evidence" value="ECO:0007669"/>
    <property type="project" value="Ensembl"/>
</dbReference>
<dbReference type="GO" id="GO:0016328">
    <property type="term" value="C:lateral plasma membrane"/>
    <property type="evidence" value="ECO:0007669"/>
    <property type="project" value="Ensembl"/>
</dbReference>
<dbReference type="GO" id="GO:0031090">
    <property type="term" value="C:organelle membrane"/>
    <property type="evidence" value="ECO:0007669"/>
    <property type="project" value="Ensembl"/>
</dbReference>
<dbReference type="GO" id="GO:0005890">
    <property type="term" value="C:sodium:potassium-exchanging ATPase complex"/>
    <property type="evidence" value="ECO:0007669"/>
    <property type="project" value="Ensembl"/>
</dbReference>
<dbReference type="GO" id="GO:0036126">
    <property type="term" value="C:sperm flagellum"/>
    <property type="evidence" value="ECO:0007669"/>
    <property type="project" value="Ensembl"/>
</dbReference>
<dbReference type="GO" id="GO:0030315">
    <property type="term" value="C:T-tubule"/>
    <property type="evidence" value="ECO:0007669"/>
    <property type="project" value="Ensembl"/>
</dbReference>
<dbReference type="GO" id="GO:0001671">
    <property type="term" value="F:ATPase activator activity"/>
    <property type="evidence" value="ECO:0007669"/>
    <property type="project" value="Ensembl"/>
</dbReference>
<dbReference type="GO" id="GO:0051117">
    <property type="term" value="F:ATPase binding"/>
    <property type="evidence" value="ECO:0007669"/>
    <property type="project" value="Ensembl"/>
</dbReference>
<dbReference type="GO" id="GO:0005391">
    <property type="term" value="F:P-type sodium:potassium-exchanging transporter activity"/>
    <property type="evidence" value="ECO:0007669"/>
    <property type="project" value="Ensembl"/>
</dbReference>
<dbReference type="GO" id="GO:0019901">
    <property type="term" value="F:protein kinase binding"/>
    <property type="evidence" value="ECO:0007669"/>
    <property type="project" value="Ensembl"/>
</dbReference>
<dbReference type="GO" id="GO:0030674">
    <property type="term" value="F:protein-macromolecule adaptor activity"/>
    <property type="evidence" value="ECO:0007669"/>
    <property type="project" value="Ensembl"/>
</dbReference>
<dbReference type="GO" id="GO:0141109">
    <property type="term" value="F:transporter activator activity"/>
    <property type="evidence" value="ECO:0007669"/>
    <property type="project" value="Ensembl"/>
</dbReference>
<dbReference type="GO" id="GO:0046034">
    <property type="term" value="P:ATP metabolic process"/>
    <property type="evidence" value="ECO:0007669"/>
    <property type="project" value="Ensembl"/>
</dbReference>
<dbReference type="GO" id="GO:0060048">
    <property type="term" value="P:cardiac muscle contraction"/>
    <property type="evidence" value="ECO:0007669"/>
    <property type="project" value="Ensembl"/>
</dbReference>
<dbReference type="GO" id="GO:0007155">
    <property type="term" value="P:cell adhesion"/>
    <property type="evidence" value="ECO:0007669"/>
    <property type="project" value="UniProtKB-KW"/>
</dbReference>
<dbReference type="GO" id="GO:0045087">
    <property type="term" value="P:innate immune response"/>
    <property type="evidence" value="ECO:0007669"/>
    <property type="project" value="UniProtKB-KW"/>
</dbReference>
<dbReference type="GO" id="GO:0006874">
    <property type="term" value="P:intracellular calcium ion homeostasis"/>
    <property type="evidence" value="ECO:0007669"/>
    <property type="project" value="Ensembl"/>
</dbReference>
<dbReference type="GO" id="GO:0030007">
    <property type="term" value="P:intracellular potassium ion homeostasis"/>
    <property type="evidence" value="ECO:0007669"/>
    <property type="project" value="Ensembl"/>
</dbReference>
<dbReference type="GO" id="GO:0006883">
    <property type="term" value="P:intracellular sodium ion homeostasis"/>
    <property type="evidence" value="ECO:0007669"/>
    <property type="project" value="Ensembl"/>
</dbReference>
<dbReference type="GO" id="GO:0086009">
    <property type="term" value="P:membrane repolarization"/>
    <property type="evidence" value="ECO:0007669"/>
    <property type="project" value="Ensembl"/>
</dbReference>
<dbReference type="GO" id="GO:1903288">
    <property type="term" value="P:positive regulation of potassium ion import across plasma membrane"/>
    <property type="evidence" value="ECO:0007669"/>
    <property type="project" value="Ensembl"/>
</dbReference>
<dbReference type="GO" id="GO:1903278">
    <property type="term" value="P:positive regulation of sodium ion export across plasma membrane"/>
    <property type="evidence" value="ECO:0007669"/>
    <property type="project" value="Ensembl"/>
</dbReference>
<dbReference type="GO" id="GO:1990573">
    <property type="term" value="P:potassium ion import across plasma membrane"/>
    <property type="evidence" value="ECO:0007669"/>
    <property type="project" value="Ensembl"/>
</dbReference>
<dbReference type="GO" id="GO:0072659">
    <property type="term" value="P:protein localization to plasma membrane"/>
    <property type="evidence" value="ECO:0007669"/>
    <property type="project" value="Ensembl"/>
</dbReference>
<dbReference type="GO" id="GO:0050821">
    <property type="term" value="P:protein stabilization"/>
    <property type="evidence" value="ECO:0007669"/>
    <property type="project" value="Ensembl"/>
</dbReference>
<dbReference type="GO" id="GO:1903169">
    <property type="term" value="P:regulation of calcium ion transmembrane transport"/>
    <property type="evidence" value="ECO:0007669"/>
    <property type="project" value="Ensembl"/>
</dbReference>
<dbReference type="GO" id="GO:0010882">
    <property type="term" value="P:regulation of cardiac muscle contraction by calcium ion signaling"/>
    <property type="evidence" value="ECO:0007669"/>
    <property type="project" value="Ensembl"/>
</dbReference>
<dbReference type="GO" id="GO:0010468">
    <property type="term" value="P:regulation of gene expression"/>
    <property type="evidence" value="ECO:0007669"/>
    <property type="project" value="Ensembl"/>
</dbReference>
<dbReference type="GO" id="GO:0055119">
    <property type="term" value="P:relaxation of cardiac muscle"/>
    <property type="evidence" value="ECO:0007669"/>
    <property type="project" value="Ensembl"/>
</dbReference>
<dbReference type="GO" id="GO:0036376">
    <property type="term" value="P:sodium ion export across plasma membrane"/>
    <property type="evidence" value="ECO:0007669"/>
    <property type="project" value="Ensembl"/>
</dbReference>
<dbReference type="FunFam" id="1.20.5.170:FF:000062">
    <property type="entry name" value="Sodium/potassium-transporting ATPase subunit beta"/>
    <property type="match status" value="1"/>
</dbReference>
<dbReference type="FunFam" id="2.60.40.1660:FF:000002">
    <property type="entry name" value="Sodium/potassium-transporting ATPase subunit beta"/>
    <property type="match status" value="1"/>
</dbReference>
<dbReference type="Gene3D" id="1.20.5.170">
    <property type="match status" value="1"/>
</dbReference>
<dbReference type="Gene3D" id="2.60.40.1660">
    <property type="entry name" value="Na, k-atpase alpha subunit"/>
    <property type="match status" value="1"/>
</dbReference>
<dbReference type="InterPro" id="IPR000402">
    <property type="entry name" value="Na/K_ATPase_sub_beta"/>
</dbReference>
<dbReference type="InterPro" id="IPR038702">
    <property type="entry name" value="Na/K_ATPase_sub_beta_sf"/>
</dbReference>
<dbReference type="NCBIfam" id="TIGR01107">
    <property type="entry name" value="Na_K_ATPase_bet"/>
    <property type="match status" value="1"/>
</dbReference>
<dbReference type="PANTHER" id="PTHR11523">
    <property type="entry name" value="SODIUM/POTASSIUM-DEPENDENT ATPASE BETA SUBUNIT"/>
    <property type="match status" value="1"/>
</dbReference>
<dbReference type="PANTHER" id="PTHR11523:SF10">
    <property type="entry name" value="SODIUM_POTASSIUM-TRANSPORTING ATPASE SUBUNIT BETA-1"/>
    <property type="match status" value="1"/>
</dbReference>
<dbReference type="Pfam" id="PF00287">
    <property type="entry name" value="Na_K-ATPase"/>
    <property type="match status" value="1"/>
</dbReference>
<dbReference type="PROSITE" id="PS00390">
    <property type="entry name" value="ATPASE_NA_K_BETA_1"/>
    <property type="match status" value="1"/>
</dbReference>
<dbReference type="PROSITE" id="PS00391">
    <property type="entry name" value="ATPASE_NA_K_BETA_2"/>
    <property type="match status" value="1"/>
</dbReference>
<protein>
    <recommendedName>
        <fullName>Sodium/potassium-transporting ATPase subunit beta-1</fullName>
    </recommendedName>
    <alternativeName>
        <fullName>Sodium/potassium-dependent ATPase subunit beta-1</fullName>
    </alternativeName>
</protein>
<comment type="function">
    <text evidence="2">This is the non-catalytic component of the active enzyme, which catalyzes the hydrolysis of ATP coupled with the exchange of Na(+) and K(+) ions across the plasma membrane. The beta subunit regulates, through assembly of alpha/beta heterodimers, the number of sodium pumps transported to the plasma membrane. Plays a role in innate immunity by enhancing virus-triggered induction of interferons (IFNs) and interferon stimulated genes (ISGs). Mechanistically, enhances the ubiquitination of TRAF3 and TRAF6 as well as the phosphorylation of TAK1 and TBK1.</text>
</comment>
<comment type="function">
    <text evidence="2">Involved in cell adhesion and establishing epithelial cell polarity.</text>
</comment>
<comment type="subunit">
    <text evidence="2 3 4">The sodium/potassium-transporting ATPase is composed of a catalytic alpha subunit, an auxiliary non-catalytic beta subunit and an additional regulatory subunit. Interacts with catalytic subunit ATP12A (By similarity). Interacts with regulatory subunit FXYD1 (By similarity). Interacts with regulatory subunit FXYD3 (By similarity). Interacts with NKAIN1, NKAIN2 and NKAIN4 (By similarity). Interacts with MLC1. Part of a complex containing MLC1, TRPV4, AQP4 and HEPACAM. Interacts with KIRREL3 (By similarity). Interacts with OBSCN (via protein kinase domain 1) (By similarity). Interacts with TRAF3 and TRAF6 (By similarity).</text>
</comment>
<comment type="subcellular location">
    <subcellularLocation>
        <location evidence="5">Cell membrane</location>
        <topology evidence="5">Single-pass type II membrane protein</topology>
    </subcellularLocation>
    <subcellularLocation>
        <location evidence="3">Apical cell membrane</location>
        <topology evidence="5">Single-pass type II membrane protein</topology>
    </subcellularLocation>
    <subcellularLocation>
        <location evidence="4">Cell membrane</location>
        <location evidence="4">Sarcolemma</location>
    </subcellularLocation>
    <text evidence="4">Colocalizes with OBSCN at the intercalated disk and sarcolemma in cardiomyocytes. Localizes in long striations at the level of Z and M lines.</text>
</comment>
<comment type="domain">
    <text evidence="1">The C-terminal lobe folds into an immunoglobulin-like domain and mediates cell adhesion properties.</text>
</comment>
<comment type="PTM">
    <text evidence="3 4">Glutathionylated (By similarity). N-glycosylated (By similarity).</text>
</comment>
<comment type="similarity">
    <text evidence="6">Belongs to the X(+)/potassium ATPases subunit beta family.</text>
</comment>
<gene>
    <name type="primary">ATP1B1</name>
</gene>
<feature type="chain" id="PRO_0000219101" description="Sodium/potassium-transporting ATPase subunit beta-1">
    <location>
        <begin position="1"/>
        <end position="303"/>
    </location>
</feature>
<feature type="topological domain" description="Cytoplasmic" evidence="5">
    <location>
        <begin position="1"/>
        <end position="34"/>
    </location>
</feature>
<feature type="transmembrane region" description="Helical; Signal-anchor for type II membrane protein" evidence="5">
    <location>
        <begin position="35"/>
        <end position="62"/>
    </location>
</feature>
<feature type="topological domain" description="Extracellular" evidence="5">
    <location>
        <begin position="63"/>
        <end position="303"/>
    </location>
</feature>
<feature type="region of interest" description="immunoglobulin-like" evidence="1">
    <location>
        <begin position="191"/>
        <end position="303"/>
    </location>
</feature>
<feature type="modified residue" description="Phosphoserine" evidence="3">
    <location>
        <position position="11"/>
    </location>
</feature>
<feature type="modified residue" description="Phosphotyrosine" evidence="4">
    <location>
        <position position="101"/>
    </location>
</feature>
<feature type="glycosylation site" description="N-linked (GlcNAc...) asparagine" evidence="1">
    <location>
        <position position="158"/>
    </location>
</feature>
<feature type="glycosylation site" description="N-linked (GlcNAc...) asparagine" evidence="1">
    <location>
        <position position="193"/>
    </location>
</feature>
<feature type="glycosylation site" description="N-linked (GlcNAc...) asparagine" evidence="1">
    <location>
        <position position="265"/>
    </location>
</feature>
<feature type="disulfide bond" evidence="1">
    <location>
        <begin position="126"/>
        <end position="149"/>
    </location>
</feature>
<feature type="disulfide bond" evidence="1">
    <location>
        <begin position="159"/>
        <end position="175"/>
    </location>
</feature>
<feature type="disulfide bond" evidence="1">
    <location>
        <begin position="213"/>
        <end position="276"/>
    </location>
</feature>
<name>AT1B1_SHEEP</name>
<proteinExistence type="evidence at transcript level"/>
<organism>
    <name type="scientific">Ovis aries</name>
    <name type="common">Sheep</name>
    <dbReference type="NCBI Taxonomy" id="9940"/>
    <lineage>
        <taxon>Eukaryota</taxon>
        <taxon>Metazoa</taxon>
        <taxon>Chordata</taxon>
        <taxon>Craniata</taxon>
        <taxon>Vertebrata</taxon>
        <taxon>Euteleostomi</taxon>
        <taxon>Mammalia</taxon>
        <taxon>Eutheria</taxon>
        <taxon>Laurasiatheria</taxon>
        <taxon>Artiodactyla</taxon>
        <taxon>Ruminantia</taxon>
        <taxon>Pecora</taxon>
        <taxon>Bovidae</taxon>
        <taxon>Caprinae</taxon>
        <taxon>Ovis</taxon>
    </lineage>
</organism>
<keyword id="KW-0130">Cell adhesion</keyword>
<keyword id="KW-1003">Cell membrane</keyword>
<keyword id="KW-1015">Disulfide bond</keyword>
<keyword id="KW-0318">Glutathionylation</keyword>
<keyword id="KW-0325">Glycoprotein</keyword>
<keyword id="KW-0391">Immunity</keyword>
<keyword id="KW-0399">Innate immunity</keyword>
<keyword id="KW-0406">Ion transport</keyword>
<keyword id="KW-0472">Membrane</keyword>
<keyword id="KW-0597">Phosphoprotein</keyword>
<keyword id="KW-0630">Potassium</keyword>
<keyword id="KW-0633">Potassium transport</keyword>
<keyword id="KW-1185">Reference proteome</keyword>
<keyword id="KW-0735">Signal-anchor</keyword>
<keyword id="KW-0915">Sodium</keyword>
<keyword id="KW-0739">Sodium transport</keyword>
<keyword id="KW-0740">Sodium/potassium transport</keyword>
<keyword id="KW-0812">Transmembrane</keyword>
<keyword id="KW-1133">Transmembrane helix</keyword>
<keyword id="KW-0813">Transport</keyword>
<reference key="1">
    <citation type="journal article" date="1986" name="Nature">
        <title>Amino-acid sequence of the beta-subunit of the (Na+ + K+)ATPase deduced from a cDNA.</title>
        <authorList>
            <person name="Shull G.E."/>
            <person name="Lane L.K."/>
            <person name="Lingrel J.B."/>
        </authorList>
    </citation>
    <scope>NUCLEOTIDE SEQUENCE [MRNA]</scope>
</reference>
<reference key="2">
    <citation type="journal article" date="1994" name="Biochim. Biophys. Acta">
        <title>Identification of antigenic sites on the Na+/K(+)-ATPase beta-subunit: their sequences and the effects of thiol reduction upon their structure.</title>
        <authorList>
            <person name="Sun Y."/>
            <person name="Ball W.J. Jr."/>
        </authorList>
    </citation>
    <scope>NUCLEOTIDE SEQUENCE [MRNA]</scope>
</reference>